<organism>
    <name type="scientific">Dictyostelium discoideum</name>
    <name type="common">Social amoeba</name>
    <dbReference type="NCBI Taxonomy" id="44689"/>
    <lineage>
        <taxon>Eukaryota</taxon>
        <taxon>Amoebozoa</taxon>
        <taxon>Evosea</taxon>
        <taxon>Eumycetozoa</taxon>
        <taxon>Dictyostelia</taxon>
        <taxon>Dictyosteliales</taxon>
        <taxon>Dictyosteliaceae</taxon>
        <taxon>Dictyostelium</taxon>
    </lineage>
</organism>
<dbReference type="EMBL" id="AAFI02000024">
    <property type="protein sequence ID" value="EAL67977.1"/>
    <property type="molecule type" value="Genomic_DNA"/>
</dbReference>
<dbReference type="RefSeq" id="XP_641913.1">
    <property type="nucleotide sequence ID" value="XM_636821.1"/>
</dbReference>
<dbReference type="FunCoup" id="Q54XT8">
    <property type="interactions" value="452"/>
</dbReference>
<dbReference type="STRING" id="44689.Q54XT8"/>
<dbReference type="PaxDb" id="44689-DDB0206170"/>
<dbReference type="EnsemblProtists" id="EAL67977">
    <property type="protein sequence ID" value="EAL67977"/>
    <property type="gene ID" value="DDB_G0278751"/>
</dbReference>
<dbReference type="GeneID" id="8621674"/>
<dbReference type="KEGG" id="ddi:DDB_G0278751"/>
<dbReference type="dictyBase" id="DDB_G0278751"/>
<dbReference type="VEuPathDB" id="AmoebaDB:DDB_G0278751"/>
<dbReference type="eggNOG" id="KOG3190">
    <property type="taxonomic scope" value="Eukaryota"/>
</dbReference>
<dbReference type="HOGENOM" id="CLU_048802_0_0_1"/>
<dbReference type="InParanoid" id="Q54XT8"/>
<dbReference type="OMA" id="ERKEMPW"/>
<dbReference type="PhylomeDB" id="Q54XT8"/>
<dbReference type="Reactome" id="R-DDI-6791226">
    <property type="pathway name" value="Major pathway of rRNA processing in the nucleolus and cytosol"/>
</dbReference>
<dbReference type="PRO" id="PR:Q54XT8"/>
<dbReference type="Proteomes" id="UP000002195">
    <property type="component" value="Chromosome 3"/>
</dbReference>
<dbReference type="GO" id="GO:0030686">
    <property type="term" value="C:90S preribosome"/>
    <property type="evidence" value="ECO:0000318"/>
    <property type="project" value="GO_Central"/>
</dbReference>
<dbReference type="GO" id="GO:0005730">
    <property type="term" value="C:nucleolus"/>
    <property type="evidence" value="ECO:0000318"/>
    <property type="project" value="GO_Central"/>
</dbReference>
<dbReference type="GO" id="GO:0000462">
    <property type="term" value="P:maturation of SSU-rRNA from tricistronic rRNA transcript (SSU-rRNA, 5.8S rRNA, LSU-rRNA)"/>
    <property type="evidence" value="ECO:0000318"/>
    <property type="project" value="GO_Central"/>
</dbReference>
<dbReference type="InterPro" id="IPR009292">
    <property type="entry name" value="RRP36"/>
</dbReference>
<dbReference type="PANTHER" id="PTHR21738">
    <property type="entry name" value="RIBOSOMAL RNA PROCESSING PROTEIN 36 HOMOLOG"/>
    <property type="match status" value="1"/>
</dbReference>
<dbReference type="PANTHER" id="PTHR21738:SF0">
    <property type="entry name" value="RIBOSOMAL RNA PROCESSING PROTEIN 36 HOMOLOG"/>
    <property type="match status" value="1"/>
</dbReference>
<dbReference type="Pfam" id="PF06102">
    <property type="entry name" value="RRP36"/>
    <property type="match status" value="1"/>
</dbReference>
<gene>
    <name type="ORF">DDB_G0278751</name>
</gene>
<name>RRP36_DICDI</name>
<keyword id="KW-0175">Coiled coil</keyword>
<keyword id="KW-0539">Nucleus</keyword>
<keyword id="KW-1185">Reference proteome</keyword>
<keyword id="KW-0690">Ribosome biogenesis</keyword>
<keyword id="KW-0698">rRNA processing</keyword>
<proteinExistence type="inferred from homology"/>
<feature type="chain" id="PRO_0000338397" description="Ribosomal RNA processing protein 36 homolog">
    <location>
        <begin position="1"/>
        <end position="298"/>
    </location>
</feature>
<feature type="region of interest" description="Disordered" evidence="3">
    <location>
        <begin position="1"/>
        <end position="131"/>
    </location>
</feature>
<feature type="region of interest" description="Disordered" evidence="3">
    <location>
        <begin position="279"/>
        <end position="298"/>
    </location>
</feature>
<feature type="coiled-coil region" evidence="2">
    <location>
        <begin position="88"/>
        <end position="112"/>
    </location>
</feature>
<feature type="coiled-coil region" evidence="2">
    <location>
        <begin position="196"/>
        <end position="228"/>
    </location>
</feature>
<feature type="compositionally biased region" description="Acidic residues" evidence="3">
    <location>
        <begin position="14"/>
        <end position="56"/>
    </location>
</feature>
<feature type="compositionally biased region" description="Polar residues" evidence="3">
    <location>
        <begin position="61"/>
        <end position="70"/>
    </location>
</feature>
<feature type="compositionally biased region" description="Polar residues" evidence="3">
    <location>
        <begin position="83"/>
        <end position="92"/>
    </location>
</feature>
<feature type="compositionally biased region" description="Basic and acidic residues" evidence="3">
    <location>
        <begin position="98"/>
        <end position="111"/>
    </location>
</feature>
<comment type="function">
    <text evidence="1">Involved in the early processing steps of the pre-rRNA in the maturation pathway leading to the 18S rRNA.</text>
</comment>
<comment type="subcellular location">
    <subcellularLocation>
        <location evidence="1">Nucleus</location>
        <location evidence="1">Nucleolus</location>
    </subcellularLocation>
</comment>
<comment type="similarity">
    <text evidence="4">Belongs to the RRP36 family.</text>
</comment>
<sequence length="298" mass="35887">MKPDIIKKRRPLPSDDEDEYNEEDEMYEDDNNNYEEDEDDDDDDDEDDEDDDENEEELIKQQLSNVSFSSLLKYKKNGPTDKLNLNTITKNLQQQKSFKKEEQQEKEEMNSKNKYKIKRESSDAPVEMTAMKPVSRFRQVVVNKTKMNVRDPRFDSLSGGKYNEDLYRKRYGFLDDVIKRDVERMESTWKQMDDCRERDQLYKKIQSKKSQLKTQQLKDQKRETKNKLWSNEIESVKKGKTPYHISNKTVKQFELQEKFKQLKASNKLDKFMETKRKRISSKEKTFLPQRRSFDQDEN</sequence>
<reference key="1">
    <citation type="journal article" date="2005" name="Nature">
        <title>The genome of the social amoeba Dictyostelium discoideum.</title>
        <authorList>
            <person name="Eichinger L."/>
            <person name="Pachebat J.A."/>
            <person name="Gloeckner G."/>
            <person name="Rajandream M.A."/>
            <person name="Sucgang R."/>
            <person name="Berriman M."/>
            <person name="Song J."/>
            <person name="Olsen R."/>
            <person name="Szafranski K."/>
            <person name="Xu Q."/>
            <person name="Tunggal B."/>
            <person name="Kummerfeld S."/>
            <person name="Madera M."/>
            <person name="Konfortov B.A."/>
            <person name="Rivero F."/>
            <person name="Bankier A.T."/>
            <person name="Lehmann R."/>
            <person name="Hamlin N."/>
            <person name="Davies R."/>
            <person name="Gaudet P."/>
            <person name="Fey P."/>
            <person name="Pilcher K."/>
            <person name="Chen G."/>
            <person name="Saunders D."/>
            <person name="Sodergren E.J."/>
            <person name="Davis P."/>
            <person name="Kerhornou A."/>
            <person name="Nie X."/>
            <person name="Hall N."/>
            <person name="Anjard C."/>
            <person name="Hemphill L."/>
            <person name="Bason N."/>
            <person name="Farbrother P."/>
            <person name="Desany B."/>
            <person name="Just E."/>
            <person name="Morio T."/>
            <person name="Rost R."/>
            <person name="Churcher C.M."/>
            <person name="Cooper J."/>
            <person name="Haydock S."/>
            <person name="van Driessche N."/>
            <person name="Cronin A."/>
            <person name="Goodhead I."/>
            <person name="Muzny D.M."/>
            <person name="Mourier T."/>
            <person name="Pain A."/>
            <person name="Lu M."/>
            <person name="Harper D."/>
            <person name="Lindsay R."/>
            <person name="Hauser H."/>
            <person name="James K.D."/>
            <person name="Quiles M."/>
            <person name="Madan Babu M."/>
            <person name="Saito T."/>
            <person name="Buchrieser C."/>
            <person name="Wardroper A."/>
            <person name="Felder M."/>
            <person name="Thangavelu M."/>
            <person name="Johnson D."/>
            <person name="Knights A."/>
            <person name="Loulseged H."/>
            <person name="Mungall K.L."/>
            <person name="Oliver K."/>
            <person name="Price C."/>
            <person name="Quail M.A."/>
            <person name="Urushihara H."/>
            <person name="Hernandez J."/>
            <person name="Rabbinowitsch E."/>
            <person name="Steffen D."/>
            <person name="Sanders M."/>
            <person name="Ma J."/>
            <person name="Kohara Y."/>
            <person name="Sharp S."/>
            <person name="Simmonds M.N."/>
            <person name="Spiegler S."/>
            <person name="Tivey A."/>
            <person name="Sugano S."/>
            <person name="White B."/>
            <person name="Walker D."/>
            <person name="Woodward J.R."/>
            <person name="Winckler T."/>
            <person name="Tanaka Y."/>
            <person name="Shaulsky G."/>
            <person name="Schleicher M."/>
            <person name="Weinstock G.M."/>
            <person name="Rosenthal A."/>
            <person name="Cox E.C."/>
            <person name="Chisholm R.L."/>
            <person name="Gibbs R.A."/>
            <person name="Loomis W.F."/>
            <person name="Platzer M."/>
            <person name="Kay R.R."/>
            <person name="Williams J.G."/>
            <person name="Dear P.H."/>
            <person name="Noegel A.A."/>
            <person name="Barrell B.G."/>
            <person name="Kuspa A."/>
        </authorList>
    </citation>
    <scope>NUCLEOTIDE SEQUENCE [LARGE SCALE GENOMIC DNA]</scope>
    <source>
        <strain>AX4</strain>
    </source>
</reference>
<accession>Q54XT8</accession>
<protein>
    <recommendedName>
        <fullName>Ribosomal RNA processing protein 36 homolog</fullName>
    </recommendedName>
</protein>
<evidence type="ECO:0000250" key="1"/>
<evidence type="ECO:0000255" key="2"/>
<evidence type="ECO:0000256" key="3">
    <source>
        <dbReference type="SAM" id="MobiDB-lite"/>
    </source>
</evidence>
<evidence type="ECO:0000305" key="4"/>